<name>RKM5_EREGS</name>
<sequence length="317" mass="35283">MLQLCPLDEDTLYTHVYERYVELDRHAETLAQDLGIHASDAETLVVDIAPAQPTKSSDTYSLTVSQSLASLRSSTVNNNSTTGYVLWSGTPFFLCWLLYAPSAAPLRDGGRVPVTDSAAQFLQLPPLFSAPARPVCVVELGSGAAGVAAIVLANYVDRYLVSDQKAILKPLRANLLANISEVSRRTVCSKQTPELSSNRRTPARCELELIALDWERIATVPAALRPTDAAHVHVLALDVVYNDFLIPPLLTAIKRLLRWYADEHAVKATAYVLVHLRAQDILQTFLEHAIIDLRLRCYYMDEERLRSSRFALYYVTL</sequence>
<accession>Q750W3</accession>
<comment type="function">
    <text evidence="1">S-adenosyl-L-methionine-dependent protein-lysine N-methyltransferase that methylates 60S ribosomal protein L1.</text>
</comment>
<comment type="similarity">
    <text evidence="3">Belongs to the class I-like SAM-binding methyltransferase superfamily. RKM5 family.</text>
</comment>
<evidence type="ECO:0000250" key="1">
    <source>
        <dbReference type="UniProtKB" id="Q12367"/>
    </source>
</evidence>
<evidence type="ECO:0000250" key="2">
    <source>
        <dbReference type="UniProtKB" id="Q9H867"/>
    </source>
</evidence>
<evidence type="ECO:0000305" key="3"/>
<feature type="chain" id="PRO_0000411040" description="Ribosomal lysine N-methyltransferase 5">
    <location>
        <begin position="1"/>
        <end position="317"/>
    </location>
</feature>
<feature type="binding site" evidence="2">
    <location>
        <position position="87"/>
    </location>
    <ligand>
        <name>S-adenosyl-L-methionine</name>
        <dbReference type="ChEBI" id="CHEBI:59789"/>
    </ligand>
</feature>
<feature type="binding site" evidence="2">
    <location>
        <begin position="141"/>
        <end position="143"/>
    </location>
    <ligand>
        <name>S-adenosyl-L-methionine</name>
        <dbReference type="ChEBI" id="CHEBI:59789"/>
    </ligand>
</feature>
<feature type="binding site" evidence="2">
    <location>
        <position position="163"/>
    </location>
    <ligand>
        <name>S-adenosyl-L-methionine</name>
        <dbReference type="ChEBI" id="CHEBI:59789"/>
    </ligand>
</feature>
<feature type="binding site" evidence="2">
    <location>
        <position position="214"/>
    </location>
    <ligand>
        <name>S-adenosyl-L-methionine</name>
        <dbReference type="ChEBI" id="CHEBI:59789"/>
    </ligand>
</feature>
<feature type="binding site" evidence="2">
    <location>
        <position position="237"/>
    </location>
    <ligand>
        <name>S-adenosyl-L-methionine</name>
        <dbReference type="ChEBI" id="CHEBI:59789"/>
    </ligand>
</feature>
<dbReference type="EC" id="2.1.1.-" evidence="1"/>
<dbReference type="EMBL" id="AE016820">
    <property type="protein sequence ID" value="AAS54317.1"/>
    <property type="molecule type" value="Genomic_DNA"/>
</dbReference>
<dbReference type="RefSeq" id="NP_986493.1">
    <property type="nucleotide sequence ID" value="NM_211555.1"/>
</dbReference>
<dbReference type="SMR" id="Q750W3"/>
<dbReference type="FunCoup" id="Q750W3">
    <property type="interactions" value="16"/>
</dbReference>
<dbReference type="STRING" id="284811.Q750W3"/>
<dbReference type="EnsemblFungi" id="AAS54317">
    <property type="protein sequence ID" value="AAS54317"/>
    <property type="gene ID" value="AGOS_AGL174W"/>
</dbReference>
<dbReference type="GeneID" id="4622786"/>
<dbReference type="KEGG" id="ago:AGOS_AGL174W"/>
<dbReference type="eggNOG" id="KOG1018">
    <property type="taxonomic scope" value="Eukaryota"/>
</dbReference>
<dbReference type="HOGENOM" id="CLU_051532_0_0_1"/>
<dbReference type="InParanoid" id="Q750W3"/>
<dbReference type="OMA" id="ACDTIYN"/>
<dbReference type="OrthoDB" id="2529286at2759"/>
<dbReference type="Proteomes" id="UP000000591">
    <property type="component" value="Chromosome VII"/>
</dbReference>
<dbReference type="GO" id="GO:0005829">
    <property type="term" value="C:cytosol"/>
    <property type="evidence" value="ECO:0000318"/>
    <property type="project" value="GO_Central"/>
</dbReference>
<dbReference type="GO" id="GO:0032991">
    <property type="term" value="C:protein-containing complex"/>
    <property type="evidence" value="ECO:0000318"/>
    <property type="project" value="GO_Central"/>
</dbReference>
<dbReference type="GO" id="GO:0008276">
    <property type="term" value="F:protein methyltransferase activity"/>
    <property type="evidence" value="ECO:0000318"/>
    <property type="project" value="GO_Central"/>
</dbReference>
<dbReference type="GO" id="GO:0008757">
    <property type="term" value="F:S-adenosylmethionine-dependent methyltransferase activity"/>
    <property type="evidence" value="ECO:0007669"/>
    <property type="project" value="EnsemblFungi"/>
</dbReference>
<dbReference type="GO" id="GO:0032259">
    <property type="term" value="P:methylation"/>
    <property type="evidence" value="ECO:0007669"/>
    <property type="project" value="UniProtKB-KW"/>
</dbReference>
<dbReference type="Gene3D" id="3.40.50.150">
    <property type="entry name" value="Vaccinia Virus protein VP39"/>
    <property type="match status" value="1"/>
</dbReference>
<dbReference type="InterPro" id="IPR019410">
    <property type="entry name" value="Methyltransf_16"/>
</dbReference>
<dbReference type="InterPro" id="IPR029063">
    <property type="entry name" value="SAM-dependent_MTases_sf"/>
</dbReference>
<dbReference type="PANTHER" id="PTHR14614">
    <property type="entry name" value="HEPATOCELLULAR CARCINOMA-ASSOCIATED ANTIGEN"/>
    <property type="match status" value="1"/>
</dbReference>
<dbReference type="PANTHER" id="PTHR14614:SF109">
    <property type="entry name" value="RIBOSOMAL LYSINE N-METHYLTRANSFERASE 5"/>
    <property type="match status" value="1"/>
</dbReference>
<gene>
    <name type="primary">RKM5</name>
    <name type="ordered locus">AGL174W</name>
</gene>
<proteinExistence type="inferred from homology"/>
<organism>
    <name type="scientific">Eremothecium gossypii (strain ATCC 10895 / CBS 109.51 / FGSC 9923 / NRRL Y-1056)</name>
    <name type="common">Yeast</name>
    <name type="synonym">Ashbya gossypii</name>
    <dbReference type="NCBI Taxonomy" id="284811"/>
    <lineage>
        <taxon>Eukaryota</taxon>
        <taxon>Fungi</taxon>
        <taxon>Dikarya</taxon>
        <taxon>Ascomycota</taxon>
        <taxon>Saccharomycotina</taxon>
        <taxon>Saccharomycetes</taxon>
        <taxon>Saccharomycetales</taxon>
        <taxon>Saccharomycetaceae</taxon>
        <taxon>Eremothecium</taxon>
    </lineage>
</organism>
<reference key="1">
    <citation type="journal article" date="2004" name="Science">
        <title>The Ashbya gossypii genome as a tool for mapping the ancient Saccharomyces cerevisiae genome.</title>
        <authorList>
            <person name="Dietrich F.S."/>
            <person name="Voegeli S."/>
            <person name="Brachat S."/>
            <person name="Lerch A."/>
            <person name="Gates K."/>
            <person name="Steiner S."/>
            <person name="Mohr C."/>
            <person name="Poehlmann R."/>
            <person name="Luedi P."/>
            <person name="Choi S."/>
            <person name="Wing R.A."/>
            <person name="Flavier A."/>
            <person name="Gaffney T.D."/>
            <person name="Philippsen P."/>
        </authorList>
    </citation>
    <scope>NUCLEOTIDE SEQUENCE [LARGE SCALE GENOMIC DNA]</scope>
    <source>
        <strain>ATCC 10895 / CBS 109.51 / FGSC 9923 / NRRL Y-1056</strain>
    </source>
</reference>
<reference key="2">
    <citation type="journal article" date="2013" name="G3 (Bethesda)">
        <title>Genomes of Ashbya fungi isolated from insects reveal four mating-type loci, numerous translocations, lack of transposons, and distinct gene duplications.</title>
        <authorList>
            <person name="Dietrich F.S."/>
            <person name="Voegeli S."/>
            <person name="Kuo S."/>
            <person name="Philippsen P."/>
        </authorList>
    </citation>
    <scope>GENOME REANNOTATION</scope>
    <source>
        <strain>ATCC 10895 / CBS 109.51 / FGSC 9923 / NRRL Y-1056</strain>
    </source>
</reference>
<protein>
    <recommendedName>
        <fullName evidence="1">Ribosomal lysine N-methyltransferase 5</fullName>
        <ecNumber evidence="1">2.1.1.-</ecNumber>
    </recommendedName>
</protein>
<keyword id="KW-0489">Methyltransferase</keyword>
<keyword id="KW-1185">Reference proteome</keyword>
<keyword id="KW-0949">S-adenosyl-L-methionine</keyword>
<keyword id="KW-0808">Transferase</keyword>